<keyword id="KW-0997">Cell inner membrane</keyword>
<keyword id="KW-1003">Cell membrane</keyword>
<keyword id="KW-0472">Membrane</keyword>
<keyword id="KW-0735">Signal-anchor</keyword>
<keyword id="KW-0812">Transmembrane</keyword>
<keyword id="KW-1133">Transmembrane helix</keyword>
<keyword id="KW-0843">Virulence</keyword>
<feature type="chain" id="PRO_0000418090" description="Translocation and assembly module subunit TamB">
    <location>
        <begin position="1"/>
        <end position="1259"/>
    </location>
</feature>
<feature type="topological domain" description="Cytoplasmic" evidence="1">
    <location>
        <begin position="1"/>
        <end position="6"/>
    </location>
</feature>
<feature type="transmembrane region" description="Helical; Signal-anchor for type II membrane protein" evidence="2">
    <location>
        <begin position="7"/>
        <end position="27"/>
    </location>
</feature>
<feature type="topological domain" description="Periplasmic" evidence="1">
    <location>
        <begin position="28"/>
        <end position="1259"/>
    </location>
</feature>
<sequence length="1259" mass="136223">MSLWKKISLGVLIFIVVLLASVAFLVGTTTGLHLVFSAANRWVPGLEIGQVTGGWRDLSLKNIRYEQPGVAVNAGEIHLAIGLDCLWRSSLCVNDLALKDINVAIDSKKMPPSEPAQEEEESGPLNLSTPWPITLSRVALNNINIKIDDTTVSVLDFTSGLAWQEKNLTLKPTRLQGLLIALPKVADVAQEEVVEPKIEKPQPDEKPLGETLKDLFAKPVMPEMTDVHLPLNLNIESFRGEQLRITGDTDLTVRTMLLKVSSIDGNMKLDTLDIDANQGTVKASGTAQLANNWPVDITLNSTLNIDPLKGEKIKLKVGGALREQLEVGVNLSGPMDVALRAQTRLAEAGLPLNLEVVSQRIAWPLTGDTQFQADDLKLKLSGKMTDYTLSMRTAVKGQDIPPATITLDAKGNERQINLDKLTVAALEGKTELKALVDWQQAISWRGELTLNGINTAKEIPDWPAKLNGVMKTKGSLYGGTWQMDVPELKLTGNVKQNSVNVNGTLKGNSYMQWTIPGLHFALGPNSADIKGELGVKELNLDAAIDAPGLDNALPGLGGMAKGIVKVRGTVEAPQLLADITARGLRWQELSVAQARIEGDIKSTDQIAGHLNVRVERISQPDVNINLVTLDAKGSEKQHQLQLRVQGEPVSGQLSLTGSFDREAARWKGTLSDTRFQTPVGPWSLTRAIALDYRNKEQKISIGPHCWLNPNAELCIPQTIDAGAAGRAVVNLNRFDLAMLKPFMPDTTQASGIFSGKADVSWDTTQEGLPQGKVTLSGRNVKVTQTVNDAPLPVAFETLNLSADLHNNRAELGWLIRLTNNGQFDGQVQVTDPQGRRNLGGNVNMRNLNLAMVNPVFSRGEKAAGMLNARLRLGGDVQSPQLFGQLQLSALDIDGNFMPFEMQPSQLTMNFSGTRSTLAGIVRTQQGQINLNGNADWSQIDNWRARVTAKGSRVRITVPPMVRLDVSPDVVFDATPSLFTLDGRVDVPWARIVVHDLPESAVGVSSDVVMLNNDLQPETPQTASIPINSNLTVHVGNNVRIDAFGLKARLTGDLKVAQDKQGLGLNGQINIPDGRFRAYGQDLLVRKGELLFSGPPDQPLLNIEAIRNPDATEDDVIAGVRVTGTADEPKAEIFSDPAMPQAEALSYLLRGQGLDSNQSDSAAMTSMLIGLGVAQSGQVVGKIGETFGVSNLALDTQGVGDSSQVVVSGYVLPGLQVKYGVGIFDSLATLTLRYRLMPKLYLEAVSGVDQALDLLYQFEF</sequence>
<evidence type="ECO:0000250" key="1">
    <source>
        <dbReference type="UniProtKB" id="P39321"/>
    </source>
</evidence>
<evidence type="ECO:0000255" key="2"/>
<evidence type="ECO:0000269" key="3">
    <source>
    </source>
</evidence>
<evidence type="ECO:0000305" key="4"/>
<reference key="1">
    <citation type="journal article" date="2012" name="Proc. Natl. Acad. Sci. U.S.A.">
        <title>The transcriptional landscape and small RNAs of Salmonella enterica serovar Typhimurium.</title>
        <authorList>
            <person name="Kroger C."/>
            <person name="Dillon S.C."/>
            <person name="Cameron A.D."/>
            <person name="Papenfort K."/>
            <person name="Sivasankaran S.K."/>
            <person name="Hokamp K."/>
            <person name="Chao Y."/>
            <person name="Sittka A."/>
            <person name="Hebrard M."/>
            <person name="Handler K."/>
            <person name="Colgan A."/>
            <person name="Leekitcharoenphon P."/>
            <person name="Langridge G.C."/>
            <person name="Lohan A.J."/>
            <person name="Loftus B."/>
            <person name="Lucchini S."/>
            <person name="Ussery D.W."/>
            <person name="Dorman C.J."/>
            <person name="Thomson N.R."/>
            <person name="Vogel J."/>
            <person name="Hinton J.C."/>
        </authorList>
    </citation>
    <scope>NUCLEOTIDE SEQUENCE [LARGE SCALE GENOMIC DNA]</scope>
    <source>
        <strain>SL1344</strain>
    </source>
</reference>
<reference key="2">
    <citation type="journal article" date="2012" name="Nat. Struct. Mol. Biol.">
        <title>Discovery of an archetypal protein transport system in bacterial outer membranes.</title>
        <authorList>
            <person name="Selkrig J."/>
            <person name="Mosbahi K."/>
            <person name="Webb C.T."/>
            <person name="Belousoff M.J."/>
            <person name="Perry A.J."/>
            <person name="Wells T.J."/>
            <person name="Morris F."/>
            <person name="Leyton D.L."/>
            <person name="Totsika M."/>
            <person name="Phan M.D."/>
            <person name="Celik N."/>
            <person name="Kelly M."/>
            <person name="Oates C."/>
            <person name="Hartland E.L."/>
            <person name="Robins-Browne R.M."/>
            <person name="Ramarathinam S.H."/>
            <person name="Purcell A.W."/>
            <person name="Schembri M.A."/>
            <person name="Strugnell R.A."/>
            <person name="Henderson I.R."/>
            <person name="Walker D."/>
            <person name="Lithgow T."/>
        </authorList>
    </citation>
    <scope>DISRUPTION PHENOTYPE</scope>
    <source>
        <strain>SL1344</strain>
    </source>
</reference>
<proteinExistence type="inferred from homology"/>
<accession>E1WAU5</accession>
<name>TAMB_SALTS</name>
<organism>
    <name type="scientific">Salmonella typhimurium (strain SL1344)</name>
    <dbReference type="NCBI Taxonomy" id="216597"/>
    <lineage>
        <taxon>Bacteria</taxon>
        <taxon>Pseudomonadati</taxon>
        <taxon>Pseudomonadota</taxon>
        <taxon>Gammaproteobacteria</taxon>
        <taxon>Enterobacterales</taxon>
        <taxon>Enterobacteriaceae</taxon>
        <taxon>Salmonella</taxon>
    </lineage>
</organism>
<comment type="function">
    <text evidence="1">Component of the translocation and assembly module (TAM), which facilitates the insertion and assembly of specific beta-barrel proteins into the outer membrane.</text>
</comment>
<comment type="function">
    <text evidence="1">In addition, is involved in outer membrane lipid homeostasis (By similarity). Likely transports phospholipids between the inner membrane and the outer membrane (By similarity).</text>
</comment>
<comment type="subunit">
    <text evidence="1">Interacts with TamA to form the translocation and assembly module (TAM).</text>
</comment>
<comment type="subcellular location">
    <subcellularLocation>
        <location evidence="1">Cell inner membrane</location>
        <topology evidence="1">Single-pass membrane protein</topology>
        <orientation evidence="1">Periplasmic side</orientation>
    </subcellularLocation>
</comment>
<comment type="disruption phenotype">
    <text evidence="3">Significantly reduced survival in human serum, probably due to complement-mediated killing.</text>
</comment>
<comment type="similarity">
    <text evidence="4">Belongs to the TamB family.</text>
</comment>
<protein>
    <recommendedName>
        <fullName evidence="1">Translocation and assembly module subunit TamB</fullName>
    </recommendedName>
    <alternativeName>
        <fullName>Autotransporter assembly factor TamB</fullName>
    </alternativeName>
    <alternativeName>
        <fullName evidence="1">Intermembrane phospholipid transporter TamB</fullName>
    </alternativeName>
</protein>
<gene>
    <name type="primary">tamB</name>
    <name type="ordered locus">SL1344_4343</name>
</gene>
<dbReference type="EMBL" id="FQ312003">
    <property type="protein sequence ID" value="CBW20429.1"/>
    <property type="molecule type" value="Genomic_DNA"/>
</dbReference>
<dbReference type="RefSeq" id="WP_000060815.1">
    <property type="nucleotide sequence ID" value="NZ_QASL01000004.1"/>
</dbReference>
<dbReference type="SMR" id="E1WAU5"/>
<dbReference type="KEGG" id="sey:SL1344_4343"/>
<dbReference type="PATRIC" id="fig|216597.6.peg.4836"/>
<dbReference type="HOGENOM" id="CLU_002338_0_1_6"/>
<dbReference type="BioCyc" id="SENT216597:SL1344_RS22635-MONOMER"/>
<dbReference type="Proteomes" id="UP000008962">
    <property type="component" value="Chromosome"/>
</dbReference>
<dbReference type="GO" id="GO:0005886">
    <property type="term" value="C:plasma membrane"/>
    <property type="evidence" value="ECO:0007669"/>
    <property type="project" value="UniProtKB-SubCell"/>
</dbReference>
<dbReference type="GO" id="GO:0097347">
    <property type="term" value="C:TAM protein secretion complex"/>
    <property type="evidence" value="ECO:0007669"/>
    <property type="project" value="TreeGrafter"/>
</dbReference>
<dbReference type="GO" id="GO:0009306">
    <property type="term" value="P:protein secretion"/>
    <property type="evidence" value="ECO:0007669"/>
    <property type="project" value="InterPro"/>
</dbReference>
<dbReference type="InterPro" id="IPR007452">
    <property type="entry name" value="TamB"/>
</dbReference>
<dbReference type="PANTHER" id="PTHR36985">
    <property type="entry name" value="TRANSLOCATION AND ASSEMBLY MODULE SUBUNIT TAMB"/>
    <property type="match status" value="1"/>
</dbReference>
<dbReference type="PANTHER" id="PTHR36985:SF1">
    <property type="entry name" value="TRANSLOCATION AND ASSEMBLY MODULE SUBUNIT TAMB"/>
    <property type="match status" value="1"/>
</dbReference>
<dbReference type="Pfam" id="PF04357">
    <property type="entry name" value="TamB"/>
    <property type="match status" value="1"/>
</dbReference>